<sequence>MTQPIIRSIPLHVVSNDHPSSSPLQPGVKQSGEDKIGRSPVQFADVPVLRKPSWIRVRIPSGNAVQSLKAKLRENRLVTVCEEAACPNIHECFSHGTATFMILGEVCTRRCSFCDVAHGRPKPPDPEEPISLARTVAEMGLKYVVVTSVDRDDLRDGGAQHFVDCIAAIRQSAPQTRIEILTPDFRGKGRMDRALDILAACPPDVFNHNVETVPALYPNVRPGADYQWSLTLLKRFKAQHPQVPTKSGIMLGLGETLDQVQATLRDLRAHDVDMVTVGQYLQPTPHHHPVLRYWTPDEYKALEEYGMALGFSHVASGPMVRSSYHADHQAKEAGLGFNATVSLGSPAVSSTEHRERNTIASKSASKTESIHHR</sequence>
<protein>
    <recommendedName>
        <fullName evidence="1">Lipoyl synthase</fullName>
        <ecNumber evidence="1">2.8.1.8</ecNumber>
    </recommendedName>
    <alternativeName>
        <fullName evidence="1">Lip-syn</fullName>
        <shortName evidence="1">LS</shortName>
    </alternativeName>
    <alternativeName>
        <fullName evidence="1">Lipoate synthase</fullName>
    </alternativeName>
    <alternativeName>
        <fullName evidence="1">Lipoic acid synthase</fullName>
    </alternativeName>
    <alternativeName>
        <fullName evidence="1">Sulfur insertion protein LipA</fullName>
    </alternativeName>
</protein>
<keyword id="KW-0004">4Fe-4S</keyword>
<keyword id="KW-0963">Cytoplasm</keyword>
<keyword id="KW-0408">Iron</keyword>
<keyword id="KW-0411">Iron-sulfur</keyword>
<keyword id="KW-0479">Metal-binding</keyword>
<keyword id="KW-0949">S-adenosyl-L-methionine</keyword>
<keyword id="KW-0808">Transferase</keyword>
<accession>B2I923</accession>
<dbReference type="EC" id="2.8.1.8" evidence="1"/>
<dbReference type="EMBL" id="CP001011">
    <property type="protein sequence ID" value="ACB91998.1"/>
    <property type="molecule type" value="Genomic_DNA"/>
</dbReference>
<dbReference type="RefSeq" id="WP_004090539.1">
    <property type="nucleotide sequence ID" value="NC_010577.1"/>
</dbReference>
<dbReference type="SMR" id="B2I923"/>
<dbReference type="GeneID" id="93904240"/>
<dbReference type="KEGG" id="xfn:XfasM23_0554"/>
<dbReference type="HOGENOM" id="CLU_033144_2_1_6"/>
<dbReference type="UniPathway" id="UPA00538">
    <property type="reaction ID" value="UER00593"/>
</dbReference>
<dbReference type="Proteomes" id="UP000001698">
    <property type="component" value="Chromosome"/>
</dbReference>
<dbReference type="GO" id="GO:0005737">
    <property type="term" value="C:cytoplasm"/>
    <property type="evidence" value="ECO:0007669"/>
    <property type="project" value="UniProtKB-SubCell"/>
</dbReference>
<dbReference type="GO" id="GO:0051539">
    <property type="term" value="F:4 iron, 4 sulfur cluster binding"/>
    <property type="evidence" value="ECO:0007669"/>
    <property type="project" value="UniProtKB-UniRule"/>
</dbReference>
<dbReference type="GO" id="GO:0016992">
    <property type="term" value="F:lipoate synthase activity"/>
    <property type="evidence" value="ECO:0007669"/>
    <property type="project" value="UniProtKB-UniRule"/>
</dbReference>
<dbReference type="GO" id="GO:0046872">
    <property type="term" value="F:metal ion binding"/>
    <property type="evidence" value="ECO:0007669"/>
    <property type="project" value="UniProtKB-KW"/>
</dbReference>
<dbReference type="CDD" id="cd01335">
    <property type="entry name" value="Radical_SAM"/>
    <property type="match status" value="1"/>
</dbReference>
<dbReference type="FunFam" id="3.20.20.70:FF:000023">
    <property type="entry name" value="Lipoyl synthase"/>
    <property type="match status" value="1"/>
</dbReference>
<dbReference type="Gene3D" id="3.20.20.70">
    <property type="entry name" value="Aldolase class I"/>
    <property type="match status" value="1"/>
</dbReference>
<dbReference type="HAMAP" id="MF_00206">
    <property type="entry name" value="Lipoyl_synth"/>
    <property type="match status" value="1"/>
</dbReference>
<dbReference type="InterPro" id="IPR013785">
    <property type="entry name" value="Aldolase_TIM"/>
</dbReference>
<dbReference type="InterPro" id="IPR006638">
    <property type="entry name" value="Elp3/MiaA/NifB-like_rSAM"/>
</dbReference>
<dbReference type="InterPro" id="IPR031691">
    <property type="entry name" value="LIAS_N"/>
</dbReference>
<dbReference type="InterPro" id="IPR003698">
    <property type="entry name" value="Lipoyl_synth"/>
</dbReference>
<dbReference type="InterPro" id="IPR007197">
    <property type="entry name" value="rSAM"/>
</dbReference>
<dbReference type="NCBIfam" id="TIGR00510">
    <property type="entry name" value="lipA"/>
    <property type="match status" value="1"/>
</dbReference>
<dbReference type="NCBIfam" id="NF004019">
    <property type="entry name" value="PRK05481.1"/>
    <property type="match status" value="1"/>
</dbReference>
<dbReference type="NCBIfam" id="NF009544">
    <property type="entry name" value="PRK12928.1"/>
    <property type="match status" value="1"/>
</dbReference>
<dbReference type="PANTHER" id="PTHR10949">
    <property type="entry name" value="LIPOYL SYNTHASE"/>
    <property type="match status" value="1"/>
</dbReference>
<dbReference type="PANTHER" id="PTHR10949:SF0">
    <property type="entry name" value="LIPOYL SYNTHASE, MITOCHONDRIAL"/>
    <property type="match status" value="1"/>
</dbReference>
<dbReference type="Pfam" id="PF16881">
    <property type="entry name" value="LIAS_N"/>
    <property type="match status" value="1"/>
</dbReference>
<dbReference type="Pfam" id="PF04055">
    <property type="entry name" value="Radical_SAM"/>
    <property type="match status" value="1"/>
</dbReference>
<dbReference type="PIRSF" id="PIRSF005963">
    <property type="entry name" value="Lipoyl_synth"/>
    <property type="match status" value="1"/>
</dbReference>
<dbReference type="SFLD" id="SFLDF00271">
    <property type="entry name" value="lipoyl_synthase"/>
    <property type="match status" value="1"/>
</dbReference>
<dbReference type="SFLD" id="SFLDG01058">
    <property type="entry name" value="lipoyl_synthase_like"/>
    <property type="match status" value="1"/>
</dbReference>
<dbReference type="SMART" id="SM00729">
    <property type="entry name" value="Elp3"/>
    <property type="match status" value="1"/>
</dbReference>
<dbReference type="SUPFAM" id="SSF102114">
    <property type="entry name" value="Radical SAM enzymes"/>
    <property type="match status" value="1"/>
</dbReference>
<dbReference type="PROSITE" id="PS51918">
    <property type="entry name" value="RADICAL_SAM"/>
    <property type="match status" value="1"/>
</dbReference>
<name>LIPA_XYLF2</name>
<reference key="1">
    <citation type="journal article" date="2010" name="J. Bacteriol.">
        <title>Whole genome sequences of two Xylella fastidiosa strains (M12 and M23) causing almond leaf scorch disease in California.</title>
        <authorList>
            <person name="Chen J."/>
            <person name="Xie G."/>
            <person name="Han S."/>
            <person name="Chertkov O."/>
            <person name="Sims D."/>
            <person name="Civerolo E.L."/>
        </authorList>
    </citation>
    <scope>NUCLEOTIDE SEQUENCE [LARGE SCALE GENOMIC DNA]</scope>
    <source>
        <strain>M23</strain>
    </source>
</reference>
<organism>
    <name type="scientific">Xylella fastidiosa (strain M23)</name>
    <dbReference type="NCBI Taxonomy" id="405441"/>
    <lineage>
        <taxon>Bacteria</taxon>
        <taxon>Pseudomonadati</taxon>
        <taxon>Pseudomonadota</taxon>
        <taxon>Gammaproteobacteria</taxon>
        <taxon>Lysobacterales</taxon>
        <taxon>Lysobacteraceae</taxon>
        <taxon>Xylella</taxon>
    </lineage>
</organism>
<comment type="function">
    <text evidence="1">Catalyzes the radical-mediated insertion of two sulfur atoms into the C-6 and C-8 positions of the octanoyl moiety bound to the lipoyl domains of lipoate-dependent enzymes, thereby converting the octanoylated domains into lipoylated derivatives.</text>
</comment>
<comment type="catalytic activity">
    <reaction evidence="1">
        <text>[[Fe-S] cluster scaffold protein carrying a second [4Fe-4S](2+) cluster] + N(6)-octanoyl-L-lysyl-[protein] + 2 oxidized [2Fe-2S]-[ferredoxin] + 2 S-adenosyl-L-methionine + 4 H(+) = [[Fe-S] cluster scaffold protein] + N(6)-[(R)-dihydrolipoyl]-L-lysyl-[protein] + 4 Fe(3+) + 2 hydrogen sulfide + 2 5'-deoxyadenosine + 2 L-methionine + 2 reduced [2Fe-2S]-[ferredoxin]</text>
        <dbReference type="Rhea" id="RHEA:16585"/>
        <dbReference type="Rhea" id="RHEA-COMP:9928"/>
        <dbReference type="Rhea" id="RHEA-COMP:10000"/>
        <dbReference type="Rhea" id="RHEA-COMP:10001"/>
        <dbReference type="Rhea" id="RHEA-COMP:10475"/>
        <dbReference type="Rhea" id="RHEA-COMP:14568"/>
        <dbReference type="Rhea" id="RHEA-COMP:14569"/>
        <dbReference type="ChEBI" id="CHEBI:15378"/>
        <dbReference type="ChEBI" id="CHEBI:17319"/>
        <dbReference type="ChEBI" id="CHEBI:29034"/>
        <dbReference type="ChEBI" id="CHEBI:29919"/>
        <dbReference type="ChEBI" id="CHEBI:33722"/>
        <dbReference type="ChEBI" id="CHEBI:33737"/>
        <dbReference type="ChEBI" id="CHEBI:33738"/>
        <dbReference type="ChEBI" id="CHEBI:57844"/>
        <dbReference type="ChEBI" id="CHEBI:59789"/>
        <dbReference type="ChEBI" id="CHEBI:78809"/>
        <dbReference type="ChEBI" id="CHEBI:83100"/>
        <dbReference type="EC" id="2.8.1.8"/>
    </reaction>
</comment>
<comment type="cofactor">
    <cofactor evidence="1">
        <name>[4Fe-4S] cluster</name>
        <dbReference type="ChEBI" id="CHEBI:49883"/>
    </cofactor>
    <text evidence="1">Binds 2 [4Fe-4S] clusters per subunit. One cluster is coordinated with 3 cysteines and an exchangeable S-adenosyl-L-methionine.</text>
</comment>
<comment type="pathway">
    <text evidence="1">Protein modification; protein lipoylation via endogenous pathway; protein N(6)-(lipoyl)lysine from octanoyl-[acyl-carrier-protein]: step 2/2.</text>
</comment>
<comment type="subcellular location">
    <subcellularLocation>
        <location evidence="1">Cytoplasm</location>
    </subcellularLocation>
</comment>
<comment type="similarity">
    <text evidence="1">Belongs to the radical SAM superfamily. Lipoyl synthase family.</text>
</comment>
<proteinExistence type="inferred from homology"/>
<feature type="chain" id="PRO_1000099644" description="Lipoyl synthase">
    <location>
        <begin position="1"/>
        <end position="373"/>
    </location>
</feature>
<feature type="domain" description="Radical SAM core" evidence="2">
    <location>
        <begin position="93"/>
        <end position="312"/>
    </location>
</feature>
<feature type="region of interest" description="Disordered" evidence="3">
    <location>
        <begin position="14"/>
        <end position="36"/>
    </location>
</feature>
<feature type="region of interest" description="Disordered" evidence="3">
    <location>
        <begin position="346"/>
        <end position="373"/>
    </location>
</feature>
<feature type="compositionally biased region" description="Polar residues" evidence="3">
    <location>
        <begin position="358"/>
        <end position="367"/>
    </location>
</feature>
<feature type="binding site" evidence="1">
    <location>
        <position position="81"/>
    </location>
    <ligand>
        <name>[4Fe-4S] cluster</name>
        <dbReference type="ChEBI" id="CHEBI:49883"/>
        <label>1</label>
    </ligand>
</feature>
<feature type="binding site" evidence="1">
    <location>
        <position position="86"/>
    </location>
    <ligand>
        <name>[4Fe-4S] cluster</name>
        <dbReference type="ChEBI" id="CHEBI:49883"/>
        <label>1</label>
    </ligand>
</feature>
<feature type="binding site" evidence="1">
    <location>
        <position position="92"/>
    </location>
    <ligand>
        <name>[4Fe-4S] cluster</name>
        <dbReference type="ChEBI" id="CHEBI:49883"/>
        <label>1</label>
    </ligand>
</feature>
<feature type="binding site" evidence="1">
    <location>
        <position position="107"/>
    </location>
    <ligand>
        <name>[4Fe-4S] cluster</name>
        <dbReference type="ChEBI" id="CHEBI:49883"/>
        <label>2</label>
        <note>4Fe-4S-S-AdoMet</note>
    </ligand>
</feature>
<feature type="binding site" evidence="1">
    <location>
        <position position="111"/>
    </location>
    <ligand>
        <name>[4Fe-4S] cluster</name>
        <dbReference type="ChEBI" id="CHEBI:49883"/>
        <label>2</label>
        <note>4Fe-4S-S-AdoMet</note>
    </ligand>
</feature>
<feature type="binding site" evidence="1">
    <location>
        <position position="114"/>
    </location>
    <ligand>
        <name>[4Fe-4S] cluster</name>
        <dbReference type="ChEBI" id="CHEBI:49883"/>
        <label>2</label>
        <note>4Fe-4S-S-AdoMet</note>
    </ligand>
</feature>
<feature type="binding site" evidence="1">
    <location>
        <position position="323"/>
    </location>
    <ligand>
        <name>[4Fe-4S] cluster</name>
        <dbReference type="ChEBI" id="CHEBI:49883"/>
        <label>1</label>
    </ligand>
</feature>
<evidence type="ECO:0000255" key="1">
    <source>
        <dbReference type="HAMAP-Rule" id="MF_00206"/>
    </source>
</evidence>
<evidence type="ECO:0000255" key="2">
    <source>
        <dbReference type="PROSITE-ProRule" id="PRU01266"/>
    </source>
</evidence>
<evidence type="ECO:0000256" key="3">
    <source>
        <dbReference type="SAM" id="MobiDB-lite"/>
    </source>
</evidence>
<gene>
    <name evidence="1" type="primary">lipA</name>
    <name type="ordered locus">XfasM23_0554</name>
</gene>